<dbReference type="EC" id="2.7.7.18" evidence="1"/>
<dbReference type="EMBL" id="AM902716">
    <property type="protein sequence ID" value="CAP43444.1"/>
    <property type="molecule type" value="Genomic_DNA"/>
</dbReference>
<dbReference type="SMR" id="A9ITN0"/>
<dbReference type="STRING" id="94624.Bpet3102"/>
<dbReference type="KEGG" id="bpt:Bpet3102"/>
<dbReference type="eggNOG" id="COG1057">
    <property type="taxonomic scope" value="Bacteria"/>
</dbReference>
<dbReference type="UniPathway" id="UPA00253">
    <property type="reaction ID" value="UER00332"/>
</dbReference>
<dbReference type="Proteomes" id="UP000001225">
    <property type="component" value="Chromosome"/>
</dbReference>
<dbReference type="GO" id="GO:0005524">
    <property type="term" value="F:ATP binding"/>
    <property type="evidence" value="ECO:0007669"/>
    <property type="project" value="UniProtKB-KW"/>
</dbReference>
<dbReference type="GO" id="GO:0004515">
    <property type="term" value="F:nicotinate-nucleotide adenylyltransferase activity"/>
    <property type="evidence" value="ECO:0007669"/>
    <property type="project" value="UniProtKB-UniRule"/>
</dbReference>
<dbReference type="GO" id="GO:0009435">
    <property type="term" value="P:NAD biosynthetic process"/>
    <property type="evidence" value="ECO:0007669"/>
    <property type="project" value="UniProtKB-UniRule"/>
</dbReference>
<dbReference type="CDD" id="cd02165">
    <property type="entry name" value="NMNAT"/>
    <property type="match status" value="1"/>
</dbReference>
<dbReference type="Gene3D" id="3.40.50.620">
    <property type="entry name" value="HUPs"/>
    <property type="match status" value="1"/>
</dbReference>
<dbReference type="HAMAP" id="MF_00244">
    <property type="entry name" value="NaMN_adenylyltr"/>
    <property type="match status" value="1"/>
</dbReference>
<dbReference type="InterPro" id="IPR004821">
    <property type="entry name" value="Cyt_trans-like"/>
</dbReference>
<dbReference type="InterPro" id="IPR005248">
    <property type="entry name" value="NadD/NMNAT"/>
</dbReference>
<dbReference type="InterPro" id="IPR014729">
    <property type="entry name" value="Rossmann-like_a/b/a_fold"/>
</dbReference>
<dbReference type="NCBIfam" id="TIGR00482">
    <property type="entry name" value="nicotinate (nicotinamide) nucleotide adenylyltransferase"/>
    <property type="match status" value="1"/>
</dbReference>
<dbReference type="PANTHER" id="PTHR39321">
    <property type="entry name" value="NICOTINATE-NUCLEOTIDE ADENYLYLTRANSFERASE-RELATED"/>
    <property type="match status" value="1"/>
</dbReference>
<dbReference type="PANTHER" id="PTHR39321:SF3">
    <property type="entry name" value="PHOSPHOPANTETHEINE ADENYLYLTRANSFERASE"/>
    <property type="match status" value="1"/>
</dbReference>
<dbReference type="Pfam" id="PF01467">
    <property type="entry name" value="CTP_transf_like"/>
    <property type="match status" value="1"/>
</dbReference>
<dbReference type="SUPFAM" id="SSF52374">
    <property type="entry name" value="Nucleotidylyl transferase"/>
    <property type="match status" value="1"/>
</dbReference>
<reference key="1">
    <citation type="journal article" date="2008" name="BMC Genomics">
        <title>The missing link: Bordetella petrii is endowed with both the metabolic versatility of environmental bacteria and virulence traits of pathogenic Bordetellae.</title>
        <authorList>
            <person name="Gross R."/>
            <person name="Guzman C.A."/>
            <person name="Sebaihia M."/>
            <person name="Martin dos Santos V.A.P."/>
            <person name="Pieper D.H."/>
            <person name="Koebnik R."/>
            <person name="Lechner M."/>
            <person name="Bartels D."/>
            <person name="Buhrmester J."/>
            <person name="Choudhuri J.V."/>
            <person name="Ebensen T."/>
            <person name="Gaigalat L."/>
            <person name="Herrmann S."/>
            <person name="Khachane A.N."/>
            <person name="Larisch C."/>
            <person name="Link S."/>
            <person name="Linke B."/>
            <person name="Meyer F."/>
            <person name="Mormann S."/>
            <person name="Nakunst D."/>
            <person name="Rueckert C."/>
            <person name="Schneiker-Bekel S."/>
            <person name="Schulze K."/>
            <person name="Voerholter F.-J."/>
            <person name="Yevsa T."/>
            <person name="Engle J.T."/>
            <person name="Goldman W.E."/>
            <person name="Puehler A."/>
            <person name="Goebel U.B."/>
            <person name="Goesmann A."/>
            <person name="Bloecker H."/>
            <person name="Kaiser O."/>
            <person name="Martinez-Arias R."/>
        </authorList>
    </citation>
    <scope>NUCLEOTIDE SEQUENCE [LARGE SCALE GENOMIC DNA]</scope>
    <source>
        <strain>ATCC BAA-461 / DSM 12804 / CCUG 43448</strain>
    </source>
</reference>
<evidence type="ECO:0000255" key="1">
    <source>
        <dbReference type="HAMAP-Rule" id="MF_00244"/>
    </source>
</evidence>
<feature type="chain" id="PRO_1000100763" description="Probable nicotinate-nucleotide adenylyltransferase">
    <location>
        <begin position="1"/>
        <end position="195"/>
    </location>
</feature>
<sequence length="195" mass="21057">MKRIGLLGGSFDPVHLAHLALARAAAAELRLDSVQLIPAANPWQRAPLRASAGHRLRMIELAIDGEPQLAVNPVELERGGPTYTIDTVRALPADAHYVWLLGTDQLANFCTWRQWQAIAGHVDLAVAARPGAPLAAPAELASWLAAHRRRLIRLPFSPMAISASDIRGRLARGASTAGLLPATVARYIARHGLYR</sequence>
<name>NADD_BORPD</name>
<gene>
    <name evidence="1" type="primary">nadD</name>
    <name type="ordered locus">Bpet3102</name>
</gene>
<organism>
    <name type="scientific">Bordetella petrii (strain ATCC BAA-461 / DSM 12804 / CCUG 43448)</name>
    <dbReference type="NCBI Taxonomy" id="340100"/>
    <lineage>
        <taxon>Bacteria</taxon>
        <taxon>Pseudomonadati</taxon>
        <taxon>Pseudomonadota</taxon>
        <taxon>Betaproteobacteria</taxon>
        <taxon>Burkholderiales</taxon>
        <taxon>Alcaligenaceae</taxon>
        <taxon>Bordetella</taxon>
    </lineage>
</organism>
<keyword id="KW-0067">ATP-binding</keyword>
<keyword id="KW-0520">NAD</keyword>
<keyword id="KW-0547">Nucleotide-binding</keyword>
<keyword id="KW-0548">Nucleotidyltransferase</keyword>
<keyword id="KW-0662">Pyridine nucleotide biosynthesis</keyword>
<keyword id="KW-0808">Transferase</keyword>
<proteinExistence type="inferred from homology"/>
<protein>
    <recommendedName>
        <fullName evidence="1">Probable nicotinate-nucleotide adenylyltransferase</fullName>
        <ecNumber evidence="1">2.7.7.18</ecNumber>
    </recommendedName>
    <alternativeName>
        <fullName evidence="1">Deamido-NAD(+) diphosphorylase</fullName>
    </alternativeName>
    <alternativeName>
        <fullName evidence="1">Deamido-NAD(+) pyrophosphorylase</fullName>
    </alternativeName>
    <alternativeName>
        <fullName evidence="1">Nicotinate mononucleotide adenylyltransferase</fullName>
        <shortName evidence="1">NaMN adenylyltransferase</shortName>
    </alternativeName>
</protein>
<comment type="function">
    <text evidence="1">Catalyzes the reversible adenylation of nicotinate mononucleotide (NaMN) to nicotinic acid adenine dinucleotide (NaAD).</text>
</comment>
<comment type="catalytic activity">
    <reaction evidence="1">
        <text>nicotinate beta-D-ribonucleotide + ATP + H(+) = deamido-NAD(+) + diphosphate</text>
        <dbReference type="Rhea" id="RHEA:22860"/>
        <dbReference type="ChEBI" id="CHEBI:15378"/>
        <dbReference type="ChEBI" id="CHEBI:30616"/>
        <dbReference type="ChEBI" id="CHEBI:33019"/>
        <dbReference type="ChEBI" id="CHEBI:57502"/>
        <dbReference type="ChEBI" id="CHEBI:58437"/>
        <dbReference type="EC" id="2.7.7.18"/>
    </reaction>
</comment>
<comment type="pathway">
    <text evidence="1">Cofactor biosynthesis; NAD(+) biosynthesis; deamido-NAD(+) from nicotinate D-ribonucleotide: step 1/1.</text>
</comment>
<comment type="similarity">
    <text evidence="1">Belongs to the NadD family.</text>
</comment>
<accession>A9ITN0</accession>